<gene>
    <name type="ordered locus">MGAS2096_Spy0287</name>
</gene>
<comment type="subcellular location">
    <subcellularLocation>
        <location evidence="1">Cytoplasm</location>
    </subcellularLocation>
</comment>
<comment type="similarity">
    <text evidence="1">Belongs to the TACO1 family. YeeN subfamily.</text>
</comment>
<feature type="chain" id="PRO_0000257142" description="Probable transcriptional regulatory protein MGAS2096_Spy0287">
    <location>
        <begin position="1"/>
        <end position="238"/>
    </location>
</feature>
<keyword id="KW-0963">Cytoplasm</keyword>
<keyword id="KW-0238">DNA-binding</keyword>
<keyword id="KW-0804">Transcription</keyword>
<keyword id="KW-0805">Transcription regulation</keyword>
<dbReference type="EMBL" id="CP000261">
    <property type="protein sequence ID" value="ABF35339.1"/>
    <property type="molecule type" value="Genomic_DNA"/>
</dbReference>
<dbReference type="SMR" id="Q1JDG9"/>
<dbReference type="KEGG" id="spj:MGAS2096_Spy0287"/>
<dbReference type="HOGENOM" id="CLU_062974_2_0_9"/>
<dbReference type="GO" id="GO:0005829">
    <property type="term" value="C:cytosol"/>
    <property type="evidence" value="ECO:0007669"/>
    <property type="project" value="TreeGrafter"/>
</dbReference>
<dbReference type="GO" id="GO:0003677">
    <property type="term" value="F:DNA binding"/>
    <property type="evidence" value="ECO:0007669"/>
    <property type="project" value="UniProtKB-UniRule"/>
</dbReference>
<dbReference type="GO" id="GO:0006355">
    <property type="term" value="P:regulation of DNA-templated transcription"/>
    <property type="evidence" value="ECO:0007669"/>
    <property type="project" value="UniProtKB-UniRule"/>
</dbReference>
<dbReference type="FunFam" id="1.10.10.200:FF:000003">
    <property type="entry name" value="Probable transcriptional regulatory protein YeeN"/>
    <property type="match status" value="1"/>
</dbReference>
<dbReference type="FunFam" id="3.30.70.980:FF:000004">
    <property type="entry name" value="Probable transcriptional regulatory protein YeeN"/>
    <property type="match status" value="1"/>
</dbReference>
<dbReference type="Gene3D" id="1.10.10.200">
    <property type="match status" value="1"/>
</dbReference>
<dbReference type="Gene3D" id="3.30.70.980">
    <property type="match status" value="2"/>
</dbReference>
<dbReference type="HAMAP" id="MF_00693">
    <property type="entry name" value="Transcrip_reg_TACO1"/>
    <property type="match status" value="1"/>
</dbReference>
<dbReference type="HAMAP" id="MF_00918">
    <property type="entry name" value="Transcrip_reg_TACO1_YeeN"/>
    <property type="match status" value="1"/>
</dbReference>
<dbReference type="InterPro" id="IPR017856">
    <property type="entry name" value="Integrase-like_N"/>
</dbReference>
<dbReference type="InterPro" id="IPR048300">
    <property type="entry name" value="TACO1_YebC-like_2nd/3rd_dom"/>
</dbReference>
<dbReference type="InterPro" id="IPR049083">
    <property type="entry name" value="TACO1_YebC_N"/>
</dbReference>
<dbReference type="InterPro" id="IPR002876">
    <property type="entry name" value="Transcrip_reg_TACO1-like"/>
</dbReference>
<dbReference type="InterPro" id="IPR026564">
    <property type="entry name" value="Transcrip_reg_TACO1-like_dom3"/>
</dbReference>
<dbReference type="InterPro" id="IPR026562">
    <property type="entry name" value="Transcrip_reg_TACO1_YeeN"/>
</dbReference>
<dbReference type="InterPro" id="IPR029072">
    <property type="entry name" value="YebC-like"/>
</dbReference>
<dbReference type="NCBIfam" id="NF001030">
    <property type="entry name" value="PRK00110.1"/>
    <property type="match status" value="1"/>
</dbReference>
<dbReference type="NCBIfam" id="NF009044">
    <property type="entry name" value="PRK12378.1"/>
    <property type="match status" value="1"/>
</dbReference>
<dbReference type="NCBIfam" id="TIGR01033">
    <property type="entry name" value="YebC/PmpR family DNA-binding transcriptional regulator"/>
    <property type="match status" value="1"/>
</dbReference>
<dbReference type="PANTHER" id="PTHR12532">
    <property type="entry name" value="TRANSLATIONAL ACTIVATOR OF CYTOCHROME C OXIDASE 1"/>
    <property type="match status" value="1"/>
</dbReference>
<dbReference type="PANTHER" id="PTHR12532:SF0">
    <property type="entry name" value="TRANSLATIONAL ACTIVATOR OF CYTOCHROME C OXIDASE 1"/>
    <property type="match status" value="1"/>
</dbReference>
<dbReference type="Pfam" id="PF20772">
    <property type="entry name" value="TACO1_YebC_N"/>
    <property type="match status" value="1"/>
</dbReference>
<dbReference type="Pfam" id="PF01709">
    <property type="entry name" value="Transcrip_reg"/>
    <property type="match status" value="1"/>
</dbReference>
<dbReference type="SUPFAM" id="SSF75625">
    <property type="entry name" value="YebC-like"/>
    <property type="match status" value="1"/>
</dbReference>
<proteinExistence type="inferred from homology"/>
<reference key="1">
    <citation type="journal article" date="2006" name="Proc. Natl. Acad. Sci. U.S.A.">
        <title>Molecular genetic anatomy of inter- and intraserotype variation in the human bacterial pathogen group A Streptococcus.</title>
        <authorList>
            <person name="Beres S.B."/>
            <person name="Richter E.W."/>
            <person name="Nagiec M.J."/>
            <person name="Sumby P."/>
            <person name="Porcella S.F."/>
            <person name="DeLeo F.R."/>
            <person name="Musser J.M."/>
        </authorList>
    </citation>
    <scope>NUCLEOTIDE SEQUENCE [LARGE SCALE GENOMIC DNA]</scope>
    <source>
        <strain>MGAS2096</strain>
    </source>
</reference>
<organism>
    <name type="scientific">Streptococcus pyogenes serotype M12 (strain MGAS2096)</name>
    <dbReference type="NCBI Taxonomy" id="370553"/>
    <lineage>
        <taxon>Bacteria</taxon>
        <taxon>Bacillati</taxon>
        <taxon>Bacillota</taxon>
        <taxon>Bacilli</taxon>
        <taxon>Lactobacillales</taxon>
        <taxon>Streptococcaceae</taxon>
        <taxon>Streptococcus</taxon>
    </lineage>
</organism>
<protein>
    <recommendedName>
        <fullName evidence="1">Probable transcriptional regulatory protein MGAS2096_Spy0287</fullName>
    </recommendedName>
</protein>
<name>Y287_STRPB</name>
<evidence type="ECO:0000255" key="1">
    <source>
        <dbReference type="HAMAP-Rule" id="MF_00918"/>
    </source>
</evidence>
<accession>Q1JDG9</accession>
<sequence>MGRKWANIVAKKTAKDGATSKVYAKFGVEIYVAAKQGEPDPELNTALKFVIDRAKQAQVPKHVIDKAIDKAKGNTDETFVEGRYEGFGPNGSMIIVDTLTSNVNRTAANVRTAYGKNGGNMGASGSVSYLFDKKGVIVFAGDDADSVFEQLLEADVDVDDVEAEEGTITVYTAPTDLHKGIQALRDNGVEEFQVTELEMIPQSEVVLEGDDLETFEKLIDALESDDDVQKVYHNVADF</sequence>